<keyword id="KW-1003">Cell membrane</keyword>
<keyword id="KW-0406">Ion transport</keyword>
<keyword id="KW-0472">Membrane</keyword>
<keyword id="KW-0597">Phosphoprotein</keyword>
<keyword id="KW-1185">Reference proteome</keyword>
<keyword id="KW-0812">Transmembrane</keyword>
<keyword id="KW-1133">Transmembrane helix</keyword>
<keyword id="KW-0813">Transport</keyword>
<keyword id="KW-0862">Zinc</keyword>
<keyword id="KW-0864">Zinc transport</keyword>
<feature type="chain" id="PRO_0000312870" description="Zinc transporter ZIP3">
    <location>
        <begin position="1"/>
        <end position="317"/>
    </location>
</feature>
<feature type="topological domain" description="Extracellular" evidence="2">
    <location>
        <begin position="1"/>
        <end position="3"/>
    </location>
</feature>
<feature type="transmembrane region" description="Helical" evidence="2">
    <location>
        <begin position="4"/>
        <end position="24"/>
    </location>
</feature>
<feature type="topological domain" description="Cytoplasmic" evidence="2">
    <location>
        <begin position="25"/>
        <end position="42"/>
    </location>
</feature>
<feature type="transmembrane region" description="Helical" evidence="2">
    <location>
        <begin position="43"/>
        <end position="63"/>
    </location>
</feature>
<feature type="topological domain" description="Extracellular" evidence="2">
    <location>
        <begin position="64"/>
        <end position="85"/>
    </location>
</feature>
<feature type="transmembrane region" description="Helical" evidence="2">
    <location>
        <begin position="86"/>
        <end position="106"/>
    </location>
</feature>
<feature type="topological domain" description="Cytoplasmic" evidence="2">
    <location>
        <begin position="107"/>
        <end position="172"/>
    </location>
</feature>
<feature type="transmembrane region" description="Helical" evidence="2">
    <location>
        <begin position="173"/>
        <end position="193"/>
    </location>
</feature>
<feature type="topological domain" description="Extracellular" evidence="2">
    <location>
        <begin position="194"/>
        <end position="199"/>
    </location>
</feature>
<feature type="transmembrane region" description="Helical" evidence="2">
    <location>
        <begin position="200"/>
        <end position="220"/>
    </location>
</feature>
<feature type="topological domain" description="Cytoplasmic" evidence="2">
    <location>
        <begin position="221"/>
        <end position="232"/>
    </location>
</feature>
<feature type="transmembrane region" description="Helical" evidence="2">
    <location>
        <begin position="233"/>
        <end position="253"/>
    </location>
</feature>
<feature type="topological domain" description="Extracellular" evidence="2">
    <location>
        <begin position="254"/>
        <end position="265"/>
    </location>
</feature>
<feature type="transmembrane region" description="Helical" evidence="2">
    <location>
        <begin position="266"/>
        <end position="286"/>
    </location>
</feature>
<feature type="topological domain" description="Cytoplasmic" evidence="2">
    <location>
        <begin position="287"/>
        <end position="294"/>
    </location>
</feature>
<feature type="transmembrane region" description="Helical" evidence="2">
    <location>
        <begin position="295"/>
        <end position="315"/>
    </location>
</feature>
<feature type="topological domain" description="Extracellular" evidence="2">
    <location>
        <begin position="316"/>
        <end position="317"/>
    </location>
</feature>
<feature type="modified residue" description="Phosphoserine" evidence="4">
    <location>
        <position position="125"/>
    </location>
</feature>
<feature type="modified residue" description="Phosphoserine" evidence="4">
    <location>
        <position position="129"/>
    </location>
</feature>
<name>S39A3_RAT</name>
<protein>
    <recommendedName>
        <fullName>Zinc transporter ZIP3</fullName>
    </recommendedName>
    <alternativeName>
        <fullName>Solute carrier family 39 member 3</fullName>
    </alternativeName>
    <alternativeName>
        <fullName>Zrt- and Irt-like protein 3</fullName>
        <shortName>ZIP-3</shortName>
    </alternativeName>
</protein>
<gene>
    <name type="primary">Slc39a3</name>
    <name type="synonym">Zip3</name>
</gene>
<comment type="function">
    <text evidence="1">Transporter for the divalent cation Zn(2+). Mediates the influx of Zn(2+) into cells from extracellular space. Controls Zn(2+) accumulation into dentate gyrus granule cells in the hippocampus. Mediates Zn(2+) reuptake from the secreted milk within the alveolar lumen.</text>
</comment>
<comment type="catalytic activity">
    <reaction evidence="1">
        <text>Zn(2+)(in) = Zn(2+)(out)</text>
        <dbReference type="Rhea" id="RHEA:29351"/>
        <dbReference type="ChEBI" id="CHEBI:29105"/>
    </reaction>
    <physiologicalReaction direction="left-to-right" evidence="1">
        <dbReference type="Rhea" id="RHEA:29352"/>
    </physiologicalReaction>
</comment>
<comment type="subcellular location">
    <subcellularLocation>
        <location evidence="1">Cell membrane</location>
        <topology evidence="2">Multi-pass membrane protein</topology>
    </subcellularLocation>
    <subcellularLocation>
        <location evidence="1">Apical cell membrane</location>
        <topology evidence="2">Multi-pass membrane protein</topology>
    </subcellularLocation>
    <text evidence="1">Localized primarily at the cell surface but also found in a perinuclear compartment in HC11 cells. In mammary epithelial cell, localized primary to the apical membrane.</text>
</comment>
<comment type="similarity">
    <text evidence="3">Belongs to the ZIP transporter (TC 2.A.5) family.</text>
</comment>
<reference key="1">
    <citation type="journal article" date="2004" name="Genome Res.">
        <title>The status, quality, and expansion of the NIH full-length cDNA project: the Mammalian Gene Collection (MGC).</title>
        <authorList>
            <consortium name="The MGC Project Team"/>
        </authorList>
    </citation>
    <scope>NUCLEOTIDE SEQUENCE [LARGE SCALE MRNA]</scope>
    <source>
        <tissue>Testis</tissue>
    </source>
</reference>
<reference key="2">
    <citation type="journal article" date="2012" name="Nat. Commun.">
        <title>Quantitative maps of protein phosphorylation sites across 14 different rat organs and tissues.</title>
        <authorList>
            <person name="Lundby A."/>
            <person name="Secher A."/>
            <person name="Lage K."/>
            <person name="Nordsborg N.B."/>
            <person name="Dmytriyev A."/>
            <person name="Lundby C."/>
            <person name="Olsen J.V."/>
        </authorList>
    </citation>
    <scope>PHOSPHORYLATION [LARGE SCALE ANALYSIS] AT SER-125 AND SER-129</scope>
    <scope>IDENTIFICATION BY MASS SPECTROMETRY [LARGE SCALE ANALYSIS]</scope>
</reference>
<dbReference type="EMBL" id="BC086411">
    <property type="protein sequence ID" value="AAH86411.1"/>
    <property type="molecule type" value="mRNA"/>
</dbReference>
<dbReference type="RefSeq" id="NP_001008357.1">
    <property type="nucleotide sequence ID" value="NM_001008356.1"/>
</dbReference>
<dbReference type="SMR" id="Q5U1X7"/>
<dbReference type="BioGRID" id="260787">
    <property type="interactions" value="2"/>
</dbReference>
<dbReference type="FunCoup" id="Q5U1X7">
    <property type="interactions" value="1311"/>
</dbReference>
<dbReference type="STRING" id="10116.ENSRNOP00000066970"/>
<dbReference type="iPTMnet" id="Q5U1X7"/>
<dbReference type="PhosphoSitePlus" id="Q5U1X7"/>
<dbReference type="PaxDb" id="10116-ENSRNOP00000066970"/>
<dbReference type="ABCD" id="Q5U1X7">
    <property type="antibodies" value="1 sequenced antibody"/>
</dbReference>
<dbReference type="Ensembl" id="ENSRNOT00000073221.3">
    <property type="protein sequence ID" value="ENSRNOP00000066970.1"/>
    <property type="gene ID" value="ENSRNOG00000045524.3"/>
</dbReference>
<dbReference type="GeneID" id="314637"/>
<dbReference type="KEGG" id="rno:314637"/>
<dbReference type="UCSC" id="RGD:1310863">
    <property type="organism name" value="rat"/>
</dbReference>
<dbReference type="AGR" id="RGD:1310863"/>
<dbReference type="CTD" id="29985"/>
<dbReference type="RGD" id="1310863">
    <property type="gene designation" value="Slc39a3"/>
</dbReference>
<dbReference type="eggNOG" id="KOG1558">
    <property type="taxonomic scope" value="Eukaryota"/>
</dbReference>
<dbReference type="GeneTree" id="ENSGT00940000160231"/>
<dbReference type="HOGENOM" id="CLU_040462_4_1_1"/>
<dbReference type="InParanoid" id="Q5U1X7"/>
<dbReference type="OMA" id="HHHGHFN"/>
<dbReference type="OrthoDB" id="81490at9989"/>
<dbReference type="PhylomeDB" id="Q5U1X7"/>
<dbReference type="TreeFam" id="TF317098"/>
<dbReference type="Reactome" id="R-RNO-442380">
    <property type="pathway name" value="Zinc influx into cells by the SLC39 gene family"/>
</dbReference>
<dbReference type="PRO" id="PR:Q5U1X7"/>
<dbReference type="Proteomes" id="UP000002494">
    <property type="component" value="Chromosome 7"/>
</dbReference>
<dbReference type="Bgee" id="ENSRNOG00000045524">
    <property type="expression patterns" value="Expressed in testis and 19 other cell types or tissues"/>
</dbReference>
<dbReference type="GO" id="GO:0016324">
    <property type="term" value="C:apical plasma membrane"/>
    <property type="evidence" value="ECO:0000266"/>
    <property type="project" value="RGD"/>
</dbReference>
<dbReference type="GO" id="GO:0098686">
    <property type="term" value="C:hippocampal mossy fiber to CA3 synapse"/>
    <property type="evidence" value="ECO:0000250"/>
    <property type="project" value="UniProtKB"/>
</dbReference>
<dbReference type="GO" id="GO:0005886">
    <property type="term" value="C:plasma membrane"/>
    <property type="evidence" value="ECO:0000250"/>
    <property type="project" value="UniProtKB"/>
</dbReference>
<dbReference type="GO" id="GO:0005385">
    <property type="term" value="F:zinc ion transmembrane transporter activity"/>
    <property type="evidence" value="ECO:0000250"/>
    <property type="project" value="UniProtKB"/>
</dbReference>
<dbReference type="GO" id="GO:0000902">
    <property type="term" value="P:cell morphogenesis"/>
    <property type="evidence" value="ECO:0000266"/>
    <property type="project" value="RGD"/>
</dbReference>
<dbReference type="GO" id="GO:0048701">
    <property type="term" value="P:embryonic cranial skeleton morphogenesis"/>
    <property type="evidence" value="ECO:0000266"/>
    <property type="project" value="RGD"/>
</dbReference>
<dbReference type="GO" id="GO:0001701">
    <property type="term" value="P:in utero embryonic development"/>
    <property type="evidence" value="ECO:0000266"/>
    <property type="project" value="RGD"/>
</dbReference>
<dbReference type="GO" id="GO:0060173">
    <property type="term" value="P:limb development"/>
    <property type="evidence" value="ECO:0000266"/>
    <property type="project" value="RGD"/>
</dbReference>
<dbReference type="GO" id="GO:0043029">
    <property type="term" value="P:T cell homeostasis"/>
    <property type="evidence" value="ECO:0000266"/>
    <property type="project" value="RGD"/>
</dbReference>
<dbReference type="GO" id="GO:0071577">
    <property type="term" value="P:zinc ion transmembrane transport"/>
    <property type="evidence" value="ECO:0000250"/>
    <property type="project" value="UniProtKB"/>
</dbReference>
<dbReference type="GO" id="GO:0006829">
    <property type="term" value="P:zinc ion transport"/>
    <property type="evidence" value="ECO:0000266"/>
    <property type="project" value="RGD"/>
</dbReference>
<dbReference type="InterPro" id="IPR003689">
    <property type="entry name" value="ZIP"/>
</dbReference>
<dbReference type="PANTHER" id="PTHR11040:SF221">
    <property type="entry name" value="ZINC TRANSPORTER ZIP3"/>
    <property type="match status" value="1"/>
</dbReference>
<dbReference type="PANTHER" id="PTHR11040">
    <property type="entry name" value="ZINC/IRON TRANSPORTER"/>
    <property type="match status" value="1"/>
</dbReference>
<dbReference type="Pfam" id="PF02535">
    <property type="entry name" value="Zip"/>
    <property type="match status" value="1"/>
</dbReference>
<proteinExistence type="evidence at protein level"/>
<accession>Q5U1X7</accession>
<organism>
    <name type="scientific">Rattus norvegicus</name>
    <name type="common">Rat</name>
    <dbReference type="NCBI Taxonomy" id="10116"/>
    <lineage>
        <taxon>Eukaryota</taxon>
        <taxon>Metazoa</taxon>
        <taxon>Chordata</taxon>
        <taxon>Craniata</taxon>
        <taxon>Vertebrata</taxon>
        <taxon>Euteleostomi</taxon>
        <taxon>Mammalia</taxon>
        <taxon>Eutheria</taxon>
        <taxon>Euarchontoglires</taxon>
        <taxon>Glires</taxon>
        <taxon>Rodentia</taxon>
        <taxon>Myomorpha</taxon>
        <taxon>Muroidea</taxon>
        <taxon>Muridae</taxon>
        <taxon>Murinae</taxon>
        <taxon>Rattus</taxon>
    </lineage>
</organism>
<evidence type="ECO:0000250" key="1">
    <source>
        <dbReference type="UniProtKB" id="Q99K24"/>
    </source>
</evidence>
<evidence type="ECO:0000255" key="2"/>
<evidence type="ECO:0000305" key="3"/>
<evidence type="ECO:0007744" key="4">
    <source>
    </source>
</evidence>
<sequence>MSQLLVAKVLCMVGVFFFMLLGSLLPVKVIEADFEKAHRSKKVLSLCNTFGGGVFLATCFNALLPAVRDKLQQVLSLGHISTDYPLAETLMMVGFFLTVFVEQLVLTFRRERPPFIDLETFNAGSDAGSDSEYESPFVGVGGRNHGLYPEPTAHSHGTGLRLRELGRPGPLRLLSLVFALSAHSVFEGLALGLQEEGERVVSLFVGVAVHETLVAVALGISMARSAVPLRDAAKLAVTVSAMIPVGIGLGLGIESARSVASSVASALLQGLAGGTFLFVTFLEILAKELEERSEQLLKVLFLVLGYAVLAGMVFLKW</sequence>